<proteinExistence type="inferred from homology"/>
<organism>
    <name type="scientific">Shewanella denitrificans (strain OS217 / ATCC BAA-1090 / DSM 15013)</name>
    <dbReference type="NCBI Taxonomy" id="318161"/>
    <lineage>
        <taxon>Bacteria</taxon>
        <taxon>Pseudomonadati</taxon>
        <taxon>Pseudomonadota</taxon>
        <taxon>Gammaproteobacteria</taxon>
        <taxon>Alteromonadales</taxon>
        <taxon>Shewanellaceae</taxon>
        <taxon>Shewanella</taxon>
    </lineage>
</organism>
<comment type="function">
    <text evidence="1">Attaches a formyl group to the free amino group of methionyl-tRNA(fMet). The formyl group appears to play a dual role in the initiator identity of N-formylmethionyl-tRNA by promoting its recognition by IF2 and preventing the misappropriation of this tRNA by the elongation apparatus.</text>
</comment>
<comment type="catalytic activity">
    <reaction evidence="1">
        <text>L-methionyl-tRNA(fMet) + (6R)-10-formyltetrahydrofolate = N-formyl-L-methionyl-tRNA(fMet) + (6S)-5,6,7,8-tetrahydrofolate + H(+)</text>
        <dbReference type="Rhea" id="RHEA:24380"/>
        <dbReference type="Rhea" id="RHEA-COMP:9952"/>
        <dbReference type="Rhea" id="RHEA-COMP:9953"/>
        <dbReference type="ChEBI" id="CHEBI:15378"/>
        <dbReference type="ChEBI" id="CHEBI:57453"/>
        <dbReference type="ChEBI" id="CHEBI:78530"/>
        <dbReference type="ChEBI" id="CHEBI:78844"/>
        <dbReference type="ChEBI" id="CHEBI:195366"/>
        <dbReference type="EC" id="2.1.2.9"/>
    </reaction>
</comment>
<comment type="similarity">
    <text evidence="1">Belongs to the Fmt family.</text>
</comment>
<accession>Q12TA6</accession>
<feature type="chain" id="PRO_1000020154" description="Methionyl-tRNA formyltransferase">
    <location>
        <begin position="1"/>
        <end position="319"/>
    </location>
</feature>
<feature type="binding site" evidence="1">
    <location>
        <begin position="112"/>
        <end position="115"/>
    </location>
    <ligand>
        <name>(6S)-5,6,7,8-tetrahydrofolate</name>
        <dbReference type="ChEBI" id="CHEBI:57453"/>
    </ligand>
</feature>
<protein>
    <recommendedName>
        <fullName evidence="1">Methionyl-tRNA formyltransferase</fullName>
        <ecNumber evidence="1">2.1.2.9</ecNumber>
    </recommendedName>
</protein>
<evidence type="ECO:0000255" key="1">
    <source>
        <dbReference type="HAMAP-Rule" id="MF_00182"/>
    </source>
</evidence>
<keyword id="KW-0648">Protein biosynthesis</keyword>
<keyword id="KW-1185">Reference proteome</keyword>
<keyword id="KW-0808">Transferase</keyword>
<name>FMT_SHEDO</name>
<dbReference type="EC" id="2.1.2.9" evidence="1"/>
<dbReference type="EMBL" id="CP000302">
    <property type="protein sequence ID" value="ABE53320.1"/>
    <property type="molecule type" value="Genomic_DNA"/>
</dbReference>
<dbReference type="RefSeq" id="WP_011494489.1">
    <property type="nucleotide sequence ID" value="NC_007954.1"/>
</dbReference>
<dbReference type="SMR" id="Q12TA6"/>
<dbReference type="STRING" id="318161.Sden_0023"/>
<dbReference type="KEGG" id="sdn:Sden_0023"/>
<dbReference type="eggNOG" id="COG0223">
    <property type="taxonomic scope" value="Bacteria"/>
</dbReference>
<dbReference type="HOGENOM" id="CLU_033347_1_2_6"/>
<dbReference type="OrthoDB" id="9802815at2"/>
<dbReference type="Proteomes" id="UP000001982">
    <property type="component" value="Chromosome"/>
</dbReference>
<dbReference type="GO" id="GO:0005829">
    <property type="term" value="C:cytosol"/>
    <property type="evidence" value="ECO:0007669"/>
    <property type="project" value="TreeGrafter"/>
</dbReference>
<dbReference type="GO" id="GO:0004479">
    <property type="term" value="F:methionyl-tRNA formyltransferase activity"/>
    <property type="evidence" value="ECO:0007669"/>
    <property type="project" value="UniProtKB-UniRule"/>
</dbReference>
<dbReference type="CDD" id="cd08646">
    <property type="entry name" value="FMT_core_Met-tRNA-FMT_N"/>
    <property type="match status" value="1"/>
</dbReference>
<dbReference type="CDD" id="cd08704">
    <property type="entry name" value="Met_tRNA_FMT_C"/>
    <property type="match status" value="1"/>
</dbReference>
<dbReference type="FunFam" id="3.40.50.170:FF:000003">
    <property type="entry name" value="Methionyl-tRNA formyltransferase"/>
    <property type="match status" value="1"/>
</dbReference>
<dbReference type="Gene3D" id="3.10.25.10">
    <property type="entry name" value="Formyl transferase, C-terminal domain"/>
    <property type="match status" value="1"/>
</dbReference>
<dbReference type="Gene3D" id="3.40.50.170">
    <property type="entry name" value="Formyl transferase, N-terminal domain"/>
    <property type="match status" value="1"/>
</dbReference>
<dbReference type="HAMAP" id="MF_00182">
    <property type="entry name" value="Formyl_trans"/>
    <property type="match status" value="1"/>
</dbReference>
<dbReference type="InterPro" id="IPR005794">
    <property type="entry name" value="Fmt"/>
</dbReference>
<dbReference type="InterPro" id="IPR005793">
    <property type="entry name" value="Formyl_trans_C"/>
</dbReference>
<dbReference type="InterPro" id="IPR037022">
    <property type="entry name" value="Formyl_trans_C_sf"/>
</dbReference>
<dbReference type="InterPro" id="IPR002376">
    <property type="entry name" value="Formyl_transf_N"/>
</dbReference>
<dbReference type="InterPro" id="IPR036477">
    <property type="entry name" value="Formyl_transf_N_sf"/>
</dbReference>
<dbReference type="InterPro" id="IPR011034">
    <property type="entry name" value="Formyl_transferase-like_C_sf"/>
</dbReference>
<dbReference type="InterPro" id="IPR044135">
    <property type="entry name" value="Met-tRNA-FMT_C"/>
</dbReference>
<dbReference type="InterPro" id="IPR041711">
    <property type="entry name" value="Met-tRNA-FMT_N"/>
</dbReference>
<dbReference type="NCBIfam" id="TIGR00460">
    <property type="entry name" value="fmt"/>
    <property type="match status" value="1"/>
</dbReference>
<dbReference type="PANTHER" id="PTHR11138">
    <property type="entry name" value="METHIONYL-TRNA FORMYLTRANSFERASE"/>
    <property type="match status" value="1"/>
</dbReference>
<dbReference type="PANTHER" id="PTHR11138:SF5">
    <property type="entry name" value="METHIONYL-TRNA FORMYLTRANSFERASE, MITOCHONDRIAL"/>
    <property type="match status" value="1"/>
</dbReference>
<dbReference type="Pfam" id="PF02911">
    <property type="entry name" value="Formyl_trans_C"/>
    <property type="match status" value="1"/>
</dbReference>
<dbReference type="Pfam" id="PF00551">
    <property type="entry name" value="Formyl_trans_N"/>
    <property type="match status" value="1"/>
</dbReference>
<dbReference type="SUPFAM" id="SSF50486">
    <property type="entry name" value="FMT C-terminal domain-like"/>
    <property type="match status" value="1"/>
</dbReference>
<dbReference type="SUPFAM" id="SSF53328">
    <property type="entry name" value="Formyltransferase"/>
    <property type="match status" value="1"/>
</dbReference>
<reference key="1">
    <citation type="submission" date="2006-03" db="EMBL/GenBank/DDBJ databases">
        <title>Complete sequence of Shewanella denitrificans OS217.</title>
        <authorList>
            <consortium name="US DOE Joint Genome Institute"/>
            <person name="Copeland A."/>
            <person name="Lucas S."/>
            <person name="Lapidus A."/>
            <person name="Barry K."/>
            <person name="Detter J.C."/>
            <person name="Glavina del Rio T."/>
            <person name="Hammon N."/>
            <person name="Israni S."/>
            <person name="Dalin E."/>
            <person name="Tice H."/>
            <person name="Pitluck S."/>
            <person name="Brettin T."/>
            <person name="Bruce D."/>
            <person name="Han C."/>
            <person name="Tapia R."/>
            <person name="Gilna P."/>
            <person name="Kiss H."/>
            <person name="Schmutz J."/>
            <person name="Larimer F."/>
            <person name="Land M."/>
            <person name="Hauser L."/>
            <person name="Kyrpides N."/>
            <person name="Lykidis A."/>
            <person name="Richardson P."/>
        </authorList>
    </citation>
    <scope>NUCLEOTIDE SEQUENCE [LARGE SCALE GENOMIC DNA]</scope>
    <source>
        <strain>OS217 / ATCC BAA-1090 / DSM 15013</strain>
    </source>
</reference>
<gene>
    <name evidence="1" type="primary">fmt</name>
    <name type="ordered locus">Sden_0023</name>
</gene>
<sequence>MKPLNIIFAGTPDFAARHLQALLDSEHNVIAVYSQPDRPAGRGKKLSASPVKELALSHDIPVFQPASLRAVEAQAELATLNADIMVVVAYGLILPQIVLDTPRLGCINVHGSILPRWRGAAPIQRALWAGDTETGVTIMQMDLGLDTGDMLLKTSLPIEDADTSASLYEKLAVQGPQALLEALDGLNAGKLKGEPQDPALANYAEKLSKEEARLDWNKSAKQLWQEIRAFNPWPVSYFEYQDSTIKVWQASYNPQPNSALAGSIIKADKHSIEVATAEGSLQLEIIQLPNKKPLAVADILNSRADWFAQGLSLLPEASS</sequence>